<protein>
    <recommendedName>
        <fullName evidence="10">Centrosomal protein of 55 kDa</fullName>
        <shortName>Cep55</shortName>
    </recommendedName>
</protein>
<organism>
    <name type="scientific">Mus musculus</name>
    <name type="common">Mouse</name>
    <dbReference type="NCBI Taxonomy" id="10090"/>
    <lineage>
        <taxon>Eukaryota</taxon>
        <taxon>Metazoa</taxon>
        <taxon>Chordata</taxon>
        <taxon>Craniata</taxon>
        <taxon>Vertebrata</taxon>
        <taxon>Euteleostomi</taxon>
        <taxon>Mammalia</taxon>
        <taxon>Eutheria</taxon>
        <taxon>Euarchontoglires</taxon>
        <taxon>Glires</taxon>
        <taxon>Rodentia</taxon>
        <taxon>Myomorpha</taxon>
        <taxon>Muroidea</taxon>
        <taxon>Muridae</taxon>
        <taxon>Murinae</taxon>
        <taxon>Mus</taxon>
        <taxon>Mus</taxon>
    </lineage>
</organism>
<reference key="1">
    <citation type="journal article" date="2005" name="Science">
        <title>The transcriptional landscape of the mammalian genome.</title>
        <authorList>
            <person name="Carninci P."/>
            <person name="Kasukawa T."/>
            <person name="Katayama S."/>
            <person name="Gough J."/>
            <person name="Frith M.C."/>
            <person name="Maeda N."/>
            <person name="Oyama R."/>
            <person name="Ravasi T."/>
            <person name="Lenhard B."/>
            <person name="Wells C."/>
            <person name="Kodzius R."/>
            <person name="Shimokawa K."/>
            <person name="Bajic V.B."/>
            <person name="Brenner S.E."/>
            <person name="Batalov S."/>
            <person name="Forrest A.R."/>
            <person name="Zavolan M."/>
            <person name="Davis M.J."/>
            <person name="Wilming L.G."/>
            <person name="Aidinis V."/>
            <person name="Allen J.E."/>
            <person name="Ambesi-Impiombato A."/>
            <person name="Apweiler R."/>
            <person name="Aturaliya R.N."/>
            <person name="Bailey T.L."/>
            <person name="Bansal M."/>
            <person name="Baxter L."/>
            <person name="Beisel K.W."/>
            <person name="Bersano T."/>
            <person name="Bono H."/>
            <person name="Chalk A.M."/>
            <person name="Chiu K.P."/>
            <person name="Choudhary V."/>
            <person name="Christoffels A."/>
            <person name="Clutterbuck D.R."/>
            <person name="Crowe M.L."/>
            <person name="Dalla E."/>
            <person name="Dalrymple B.P."/>
            <person name="de Bono B."/>
            <person name="Della Gatta G."/>
            <person name="di Bernardo D."/>
            <person name="Down T."/>
            <person name="Engstrom P."/>
            <person name="Fagiolini M."/>
            <person name="Faulkner G."/>
            <person name="Fletcher C.F."/>
            <person name="Fukushima T."/>
            <person name="Furuno M."/>
            <person name="Futaki S."/>
            <person name="Gariboldi M."/>
            <person name="Georgii-Hemming P."/>
            <person name="Gingeras T.R."/>
            <person name="Gojobori T."/>
            <person name="Green R.E."/>
            <person name="Gustincich S."/>
            <person name="Harbers M."/>
            <person name="Hayashi Y."/>
            <person name="Hensch T.K."/>
            <person name="Hirokawa N."/>
            <person name="Hill D."/>
            <person name="Huminiecki L."/>
            <person name="Iacono M."/>
            <person name="Ikeo K."/>
            <person name="Iwama A."/>
            <person name="Ishikawa T."/>
            <person name="Jakt M."/>
            <person name="Kanapin A."/>
            <person name="Katoh M."/>
            <person name="Kawasawa Y."/>
            <person name="Kelso J."/>
            <person name="Kitamura H."/>
            <person name="Kitano H."/>
            <person name="Kollias G."/>
            <person name="Krishnan S.P."/>
            <person name="Kruger A."/>
            <person name="Kummerfeld S.K."/>
            <person name="Kurochkin I.V."/>
            <person name="Lareau L.F."/>
            <person name="Lazarevic D."/>
            <person name="Lipovich L."/>
            <person name="Liu J."/>
            <person name="Liuni S."/>
            <person name="McWilliam S."/>
            <person name="Madan Babu M."/>
            <person name="Madera M."/>
            <person name="Marchionni L."/>
            <person name="Matsuda H."/>
            <person name="Matsuzawa S."/>
            <person name="Miki H."/>
            <person name="Mignone F."/>
            <person name="Miyake S."/>
            <person name="Morris K."/>
            <person name="Mottagui-Tabar S."/>
            <person name="Mulder N."/>
            <person name="Nakano N."/>
            <person name="Nakauchi H."/>
            <person name="Ng P."/>
            <person name="Nilsson R."/>
            <person name="Nishiguchi S."/>
            <person name="Nishikawa S."/>
            <person name="Nori F."/>
            <person name="Ohara O."/>
            <person name="Okazaki Y."/>
            <person name="Orlando V."/>
            <person name="Pang K.C."/>
            <person name="Pavan W.J."/>
            <person name="Pavesi G."/>
            <person name="Pesole G."/>
            <person name="Petrovsky N."/>
            <person name="Piazza S."/>
            <person name="Reed J."/>
            <person name="Reid J.F."/>
            <person name="Ring B.Z."/>
            <person name="Ringwald M."/>
            <person name="Rost B."/>
            <person name="Ruan Y."/>
            <person name="Salzberg S.L."/>
            <person name="Sandelin A."/>
            <person name="Schneider C."/>
            <person name="Schoenbach C."/>
            <person name="Sekiguchi K."/>
            <person name="Semple C.A."/>
            <person name="Seno S."/>
            <person name="Sessa L."/>
            <person name="Sheng Y."/>
            <person name="Shibata Y."/>
            <person name="Shimada H."/>
            <person name="Shimada K."/>
            <person name="Silva D."/>
            <person name="Sinclair B."/>
            <person name="Sperling S."/>
            <person name="Stupka E."/>
            <person name="Sugiura K."/>
            <person name="Sultana R."/>
            <person name="Takenaka Y."/>
            <person name="Taki K."/>
            <person name="Tammoja K."/>
            <person name="Tan S.L."/>
            <person name="Tang S."/>
            <person name="Taylor M.S."/>
            <person name="Tegner J."/>
            <person name="Teichmann S.A."/>
            <person name="Ueda H.R."/>
            <person name="van Nimwegen E."/>
            <person name="Verardo R."/>
            <person name="Wei C.L."/>
            <person name="Yagi K."/>
            <person name="Yamanishi H."/>
            <person name="Zabarovsky E."/>
            <person name="Zhu S."/>
            <person name="Zimmer A."/>
            <person name="Hide W."/>
            <person name="Bult C."/>
            <person name="Grimmond S.M."/>
            <person name="Teasdale R.D."/>
            <person name="Liu E.T."/>
            <person name="Brusic V."/>
            <person name="Quackenbush J."/>
            <person name="Wahlestedt C."/>
            <person name="Mattick J.S."/>
            <person name="Hume D.A."/>
            <person name="Kai C."/>
            <person name="Sasaki D."/>
            <person name="Tomaru Y."/>
            <person name="Fukuda S."/>
            <person name="Kanamori-Katayama M."/>
            <person name="Suzuki M."/>
            <person name="Aoki J."/>
            <person name="Arakawa T."/>
            <person name="Iida J."/>
            <person name="Imamura K."/>
            <person name="Itoh M."/>
            <person name="Kato T."/>
            <person name="Kawaji H."/>
            <person name="Kawagashira N."/>
            <person name="Kawashima T."/>
            <person name="Kojima M."/>
            <person name="Kondo S."/>
            <person name="Konno H."/>
            <person name="Nakano K."/>
            <person name="Ninomiya N."/>
            <person name="Nishio T."/>
            <person name="Okada M."/>
            <person name="Plessy C."/>
            <person name="Shibata K."/>
            <person name="Shiraki T."/>
            <person name="Suzuki S."/>
            <person name="Tagami M."/>
            <person name="Waki K."/>
            <person name="Watahiki A."/>
            <person name="Okamura-Oho Y."/>
            <person name="Suzuki H."/>
            <person name="Kawai J."/>
            <person name="Hayashizaki Y."/>
        </authorList>
    </citation>
    <scope>NUCLEOTIDE SEQUENCE [LARGE SCALE MRNA] (ISOFORM 1)</scope>
    <scope>VARIANT ASP-55</scope>
    <source>
        <strain>C57BL/6J</strain>
        <strain>NOD</strain>
        <tissue>Embryo</tissue>
        <tissue>Lung</tissue>
        <tissue>Thymus</tissue>
    </source>
</reference>
<reference key="2">
    <citation type="journal article" date="2004" name="Genome Res.">
        <title>The status, quality, and expansion of the NIH full-length cDNA project: the Mammalian Gene Collection (MGC).</title>
        <authorList>
            <consortium name="The MGC Project Team"/>
        </authorList>
    </citation>
    <scope>NUCLEOTIDE SEQUENCE [LARGE SCALE MRNA] (ISOFORM 2)</scope>
    <scope>NUCLEOTIDE SEQUENCE [LARGE SCALE MRNA] OF 76-462 (ISOFORM 1)</scope>
    <scope>VARIANT ASP-55</scope>
    <source>
        <strain>Czech II</strain>
        <strain>FVB/N</strain>
        <tissue>Mammary tumor</tissue>
    </source>
</reference>
<reference key="3">
    <citation type="journal article" date="2009" name="Immunity">
        <title>The phagosomal proteome in interferon-gamma-activated macrophages.</title>
        <authorList>
            <person name="Trost M."/>
            <person name="English L."/>
            <person name="Lemieux S."/>
            <person name="Courcelles M."/>
            <person name="Desjardins M."/>
            <person name="Thibault P."/>
        </authorList>
    </citation>
    <scope>PHOSPHORYLATION [LARGE SCALE ANALYSIS] AT SER-426 AND SER-434</scope>
    <scope>IDENTIFICATION BY MASS SPECTROMETRY [LARGE SCALE ANALYSIS]</scope>
</reference>
<reference key="4">
    <citation type="journal article" date="2010" name="Cell">
        <title>A tissue-specific atlas of mouse protein phosphorylation and expression.</title>
        <authorList>
            <person name="Huttlin E.L."/>
            <person name="Jedrychowski M.P."/>
            <person name="Elias J.E."/>
            <person name="Goswami T."/>
            <person name="Rad R."/>
            <person name="Beausoleil S.A."/>
            <person name="Villen J."/>
            <person name="Haas W."/>
            <person name="Sowa M.E."/>
            <person name="Gygi S.P."/>
        </authorList>
    </citation>
    <scope>PHOSPHORYLATION [LARGE SCALE ANALYSIS] AT SER-96; SER-426; SER-428 AND SER-434</scope>
    <scope>IDENTIFICATION BY MASS SPECTROMETRY [LARGE SCALE ANALYSIS]</scope>
    <source>
        <tissue>Lung</tissue>
        <tissue>Spleen</tissue>
        <tissue>Testis</tissue>
    </source>
</reference>
<keyword id="KW-0025">Alternative splicing</keyword>
<keyword id="KW-0131">Cell cycle</keyword>
<keyword id="KW-0132">Cell division</keyword>
<keyword id="KW-0175">Coiled coil</keyword>
<keyword id="KW-0963">Cytoplasm</keyword>
<keyword id="KW-0206">Cytoskeleton</keyword>
<keyword id="KW-0498">Mitosis</keyword>
<keyword id="KW-0597">Phosphoprotein</keyword>
<keyword id="KW-1185">Reference proteome</keyword>
<dbReference type="EMBL" id="AK004655">
    <property type="protein sequence ID" value="BAB23446.1"/>
    <property type="molecule type" value="mRNA"/>
</dbReference>
<dbReference type="EMBL" id="AK028216">
    <property type="protein sequence ID" value="BAC25819.1"/>
    <property type="molecule type" value="mRNA"/>
</dbReference>
<dbReference type="EMBL" id="AK088548">
    <property type="protein sequence ID" value="BAC40417.1"/>
    <property type="molecule type" value="mRNA"/>
</dbReference>
<dbReference type="EMBL" id="BC026966">
    <property type="protein sequence ID" value="AAH26966.1"/>
    <property type="molecule type" value="mRNA"/>
</dbReference>
<dbReference type="EMBL" id="BC031396">
    <property type="protein sequence ID" value="AAH31396.1"/>
    <property type="molecule type" value="mRNA"/>
</dbReference>
<dbReference type="CCDS" id="CCDS29782.1">
    <molecule id="Q8BT07-2"/>
</dbReference>
<dbReference type="CCDS" id="CCDS50429.1">
    <molecule id="Q8BT07-1"/>
</dbReference>
<dbReference type="RefSeq" id="NP_001157834.1">
    <molecule id="Q8BT07-1"/>
    <property type="nucleotide sequence ID" value="NM_001164362.2"/>
</dbReference>
<dbReference type="RefSeq" id="NP_001347592.1">
    <molecule id="Q8BT07-1"/>
    <property type="nucleotide sequence ID" value="NM_001360663.1"/>
</dbReference>
<dbReference type="RefSeq" id="NP_082569.1">
    <molecule id="Q8BT07-1"/>
    <property type="nucleotide sequence ID" value="NM_028293.2"/>
</dbReference>
<dbReference type="RefSeq" id="NP_083036.2">
    <molecule id="Q8BT07-2"/>
    <property type="nucleotide sequence ID" value="NM_028760.3"/>
</dbReference>
<dbReference type="RefSeq" id="XP_006527459.1">
    <molecule id="Q8BT07-1"/>
    <property type="nucleotide sequence ID" value="XM_006527396.3"/>
</dbReference>
<dbReference type="RefSeq" id="XP_006527460.1">
    <molecule id="Q8BT07-1"/>
    <property type="nucleotide sequence ID" value="XM_006527397.5"/>
</dbReference>
<dbReference type="RefSeq" id="XP_006527461.1">
    <molecule id="Q8BT07-1"/>
    <property type="nucleotide sequence ID" value="XM_006527398.5"/>
</dbReference>
<dbReference type="RefSeq" id="XP_006527462.1">
    <molecule id="Q8BT07-1"/>
    <property type="nucleotide sequence ID" value="XM_006527399.4"/>
</dbReference>
<dbReference type="RefSeq" id="XP_006527463.1">
    <property type="nucleotide sequence ID" value="XM_006527400.2"/>
</dbReference>
<dbReference type="RefSeq" id="XP_006527464.1">
    <molecule id="Q8BT07-1"/>
    <property type="nucleotide sequence ID" value="XM_006527401.2"/>
</dbReference>
<dbReference type="RefSeq" id="XP_011245683.1">
    <molecule id="Q8BT07-1"/>
    <property type="nucleotide sequence ID" value="XM_011247381.4"/>
</dbReference>
<dbReference type="RefSeq" id="XP_036017603.1">
    <molecule id="Q8BT07-1"/>
    <property type="nucleotide sequence ID" value="XM_036161710.1"/>
</dbReference>
<dbReference type="SMR" id="Q8BT07"/>
<dbReference type="BioGRID" id="216498">
    <property type="interactions" value="44"/>
</dbReference>
<dbReference type="FunCoup" id="Q8BT07">
    <property type="interactions" value="281"/>
</dbReference>
<dbReference type="IntAct" id="Q8BT07">
    <property type="interactions" value="49"/>
</dbReference>
<dbReference type="STRING" id="10090.ENSMUSP00000127961"/>
<dbReference type="iPTMnet" id="Q8BT07"/>
<dbReference type="PhosphoSitePlus" id="Q8BT07"/>
<dbReference type="SwissPalm" id="Q8BT07"/>
<dbReference type="jPOST" id="Q8BT07"/>
<dbReference type="PaxDb" id="10090-ENSMUSP00000127961"/>
<dbReference type="PeptideAtlas" id="Q8BT07"/>
<dbReference type="ProteomicsDB" id="281194">
    <molecule id="Q8BT07-1"/>
</dbReference>
<dbReference type="ProteomicsDB" id="281195">
    <molecule id="Q8BT07-2"/>
</dbReference>
<dbReference type="Pumba" id="Q8BT07"/>
<dbReference type="Antibodypedia" id="30468">
    <property type="antibodies" value="326 antibodies from 32 providers"/>
</dbReference>
<dbReference type="DNASU" id="74107"/>
<dbReference type="Ensembl" id="ENSMUST00000096096.12">
    <molecule id="Q8BT07-1"/>
    <property type="protein sequence ID" value="ENSMUSP00000093802.5"/>
    <property type="gene ID" value="ENSMUSG00000024989.16"/>
</dbReference>
<dbReference type="Ensembl" id="ENSMUST00000116506.8">
    <molecule id="Q8BT07-2"/>
    <property type="protein sequence ID" value="ENSMUSP00000112205.2"/>
    <property type="gene ID" value="ENSMUSG00000024989.16"/>
</dbReference>
<dbReference type="Ensembl" id="ENSMUST00000169673.3">
    <molecule id="Q8BT07-1"/>
    <property type="protein sequence ID" value="ENSMUSP00000127961.2"/>
    <property type="gene ID" value="ENSMUSG00000024989.16"/>
</dbReference>
<dbReference type="Ensembl" id="ENSMUST00000236044.2">
    <molecule id="Q8BT07-1"/>
    <property type="protein sequence ID" value="ENSMUSP00000157898.2"/>
    <property type="gene ID" value="ENSMUSG00000024989.16"/>
</dbReference>
<dbReference type="Ensembl" id="ENSMUST00000237408.2">
    <molecule id="Q8BT07-2"/>
    <property type="protein sequence ID" value="ENSMUSP00000157871.2"/>
    <property type="gene ID" value="ENSMUSG00000024989.16"/>
</dbReference>
<dbReference type="GeneID" id="74107"/>
<dbReference type="KEGG" id="mmu:74107"/>
<dbReference type="UCSC" id="uc008hiy.2">
    <molecule id="Q8BT07-1"/>
    <property type="organism name" value="mouse"/>
</dbReference>
<dbReference type="UCSC" id="uc008hja.2">
    <molecule id="Q8BT07-2"/>
    <property type="organism name" value="mouse"/>
</dbReference>
<dbReference type="AGR" id="MGI:1921357"/>
<dbReference type="CTD" id="55165"/>
<dbReference type="MGI" id="MGI:1921357">
    <property type="gene designation" value="Cep55"/>
</dbReference>
<dbReference type="VEuPathDB" id="HostDB:ENSMUSG00000024989"/>
<dbReference type="eggNOG" id="ENOG502QTDI">
    <property type="taxonomic scope" value="Eukaryota"/>
</dbReference>
<dbReference type="GeneTree" id="ENSGT00510000047961"/>
<dbReference type="HOGENOM" id="CLU_047132_0_0_1"/>
<dbReference type="InParanoid" id="Q8BT07"/>
<dbReference type="OMA" id="AVMAKCS"/>
<dbReference type="OrthoDB" id="8441172at2759"/>
<dbReference type="PhylomeDB" id="Q8BT07"/>
<dbReference type="TreeFam" id="TF331107"/>
<dbReference type="BioGRID-ORCS" id="74107">
    <property type="hits" value="19 hits in 79 CRISPR screens"/>
</dbReference>
<dbReference type="ChiTaRS" id="Cep55">
    <property type="organism name" value="mouse"/>
</dbReference>
<dbReference type="PRO" id="PR:Q8BT07"/>
<dbReference type="Proteomes" id="UP000000589">
    <property type="component" value="Chromosome 19"/>
</dbReference>
<dbReference type="RNAct" id="Q8BT07">
    <property type="molecule type" value="protein"/>
</dbReference>
<dbReference type="Bgee" id="ENSMUSG00000024989">
    <property type="expression patterns" value="Expressed in primary oocyte and 173 other cell types or tissues"/>
</dbReference>
<dbReference type="GO" id="GO:0005814">
    <property type="term" value="C:centriole"/>
    <property type="evidence" value="ECO:0007669"/>
    <property type="project" value="UniProtKB-SubCell"/>
</dbReference>
<dbReference type="GO" id="GO:0005813">
    <property type="term" value="C:centrosome"/>
    <property type="evidence" value="ECO:0000266"/>
    <property type="project" value="MGI"/>
</dbReference>
<dbReference type="GO" id="GO:0032154">
    <property type="term" value="C:cleavage furrow"/>
    <property type="evidence" value="ECO:0007669"/>
    <property type="project" value="UniProtKB-SubCell"/>
</dbReference>
<dbReference type="GO" id="GO:0005737">
    <property type="term" value="C:cytoplasm"/>
    <property type="evidence" value="ECO:0007669"/>
    <property type="project" value="UniProtKB-SubCell"/>
</dbReference>
<dbReference type="GO" id="GO:0090543">
    <property type="term" value="C:Flemming body"/>
    <property type="evidence" value="ECO:0000250"/>
    <property type="project" value="UniProtKB"/>
</dbReference>
<dbReference type="GO" id="GO:0045171">
    <property type="term" value="C:intercellular bridge"/>
    <property type="evidence" value="ECO:0000314"/>
    <property type="project" value="MGI"/>
</dbReference>
<dbReference type="GO" id="GO:0030496">
    <property type="term" value="C:midbody"/>
    <property type="evidence" value="ECO:0000314"/>
    <property type="project" value="MGI"/>
</dbReference>
<dbReference type="GO" id="GO:0042802">
    <property type="term" value="F:identical protein binding"/>
    <property type="evidence" value="ECO:0007669"/>
    <property type="project" value="Ensembl"/>
</dbReference>
<dbReference type="GO" id="GO:1904888">
    <property type="term" value="P:cranial skeletal system development"/>
    <property type="evidence" value="ECO:0000250"/>
    <property type="project" value="UniProtKB"/>
</dbReference>
<dbReference type="GO" id="GO:0045184">
    <property type="term" value="P:establishment of protein localization"/>
    <property type="evidence" value="ECO:0007669"/>
    <property type="project" value="Ensembl"/>
</dbReference>
<dbReference type="GO" id="GO:0061952">
    <property type="term" value="P:midbody abscission"/>
    <property type="evidence" value="ECO:0007669"/>
    <property type="project" value="Ensembl"/>
</dbReference>
<dbReference type="GO" id="GO:0000281">
    <property type="term" value="P:mitotic cytokinesis"/>
    <property type="evidence" value="ECO:0000266"/>
    <property type="project" value="MGI"/>
</dbReference>
<dbReference type="GO" id="GO:0051896">
    <property type="term" value="P:regulation of phosphatidylinositol 3-kinase/protein kinase B signal transduction"/>
    <property type="evidence" value="ECO:0007669"/>
    <property type="project" value="InterPro"/>
</dbReference>
<dbReference type="FunFam" id="1.20.5.1180:FF:000002">
    <property type="entry name" value="Centrosomal protein of 55 kDa"/>
    <property type="match status" value="1"/>
</dbReference>
<dbReference type="FunFam" id="1.20.5.990:FF:000006">
    <property type="entry name" value="Centrosomal protein of 55 kDa"/>
    <property type="match status" value="1"/>
</dbReference>
<dbReference type="Gene3D" id="1.20.5.1180">
    <property type="entry name" value="Geminin coiled-coil domain"/>
    <property type="match status" value="1"/>
</dbReference>
<dbReference type="Gene3D" id="1.20.5.990">
    <property type="entry name" value="Nemo cc2-lz domain - 1d5 darpin complex"/>
    <property type="match status" value="1"/>
</dbReference>
<dbReference type="InterPro" id="IPR038926">
    <property type="entry name" value="CEP55"/>
</dbReference>
<dbReference type="InterPro" id="IPR022008">
    <property type="entry name" value="EABR"/>
</dbReference>
<dbReference type="PANTHER" id="PTHR31838">
    <property type="entry name" value="CENTROSOMAL PROTEIN OF 55 KDA"/>
    <property type="match status" value="1"/>
</dbReference>
<dbReference type="PANTHER" id="PTHR31838:SF1">
    <property type="entry name" value="CENTROSOMAL PROTEIN OF 55 KDA"/>
    <property type="match status" value="1"/>
</dbReference>
<dbReference type="Pfam" id="PF12180">
    <property type="entry name" value="EABR"/>
    <property type="match status" value="1"/>
</dbReference>
<sequence length="462" mass="53930">MSSRSPKDLIKSKWGSRPSSSKSDTALEKFKGEIAAFKTSLDEITSGKGKMAEKGRSRLLEKIQVLEAEREKNVYYLLEKDKEIQRLKDHLRSRYSSSSLFEQLEEKTKECEKKQQLLESLSKETDVLKNQLSATTKRLSELESKASTLHLSQSMPANCFNSSMNSIHEKEMQLKDALEKNQQWLVYDQQREAYVKGLLAKIFELEKRTETAAASLTQQMKKIESEGYLQVEKQKYDHLLENAKKDLEVERQAVTQLRLELDEFRRKYEEARKEVEDLNQLLSSQRKADIQHLEEDKQKTERIQKLREESSIFKGKLEEERKRSEELLSQVRILYDSLLKHQEEQARVALLEQQMQACTLDFENEKLDRQNMQHQLYVILKELRKAKSQITQLESLKQLHGFTITEQPFPLQREPESRVKATSPKSPSAALNDSLVECPKCSVQYPATEHRDLLVHVEYCMK</sequence>
<name>CEP55_MOUSE</name>
<feature type="chain" id="PRO_0000238665" description="Centrosomal protein of 55 kDa">
    <location>
        <begin position="1"/>
        <end position="462"/>
    </location>
</feature>
<feature type="region of interest" description="Disordered" evidence="5">
    <location>
        <begin position="1"/>
        <end position="26"/>
    </location>
</feature>
<feature type="region of interest" description="Interaction with TSG101" evidence="1">
    <location>
        <begin position="157"/>
        <end position="235"/>
    </location>
</feature>
<feature type="region of interest" description="Interaction with PDCD6IP" evidence="1">
    <location>
        <begin position="160"/>
        <end position="214"/>
    </location>
</feature>
<feature type="region of interest" description="Required for localization to the interphase centrosome and to the midbody during cytokinesis" evidence="1">
    <location>
        <begin position="354"/>
        <end position="462"/>
    </location>
</feature>
<feature type="region of interest" description="Disordered" evidence="5">
    <location>
        <begin position="410"/>
        <end position="430"/>
    </location>
</feature>
<feature type="coiled-coil region" evidence="4">
    <location>
        <begin position="50"/>
        <end position="400"/>
    </location>
</feature>
<feature type="compositionally biased region" description="Basic and acidic residues" evidence="5">
    <location>
        <begin position="1"/>
        <end position="11"/>
    </location>
</feature>
<feature type="compositionally biased region" description="Low complexity" evidence="5">
    <location>
        <begin position="12"/>
        <end position="23"/>
    </location>
</feature>
<feature type="modified residue" description="Phosphoserine" evidence="12">
    <location>
        <position position="96"/>
    </location>
</feature>
<feature type="modified residue" description="Phosphoserine" evidence="2">
    <location>
        <position position="99"/>
    </location>
</feature>
<feature type="modified residue" description="Phosphoserine" evidence="3">
    <location>
        <position position="423"/>
    </location>
</feature>
<feature type="modified residue" description="Phosphoserine" evidence="11 12">
    <location>
        <position position="426"/>
    </location>
</feature>
<feature type="modified residue" description="Phosphoserine" evidence="12">
    <location>
        <position position="428"/>
    </location>
</feature>
<feature type="modified residue" description="Phosphoserine; by PLK1" evidence="11 12">
    <location>
        <position position="434"/>
    </location>
</feature>
<feature type="splice variant" id="VSP_018630" description="In isoform 2." evidence="8">
    <location>
        <position position="397"/>
    </location>
</feature>
<feature type="sequence variant" evidence="6 7">
    <original>G</original>
    <variation>D</variation>
    <location>
        <position position="55"/>
    </location>
</feature>
<feature type="sequence conflict" description="In Ref. 1; BAC40417." evidence="9" ref="1">
    <original>R</original>
    <variation>G</variation>
    <location>
        <position position="70"/>
    </location>
</feature>
<feature type="sequence conflict" description="In Ref. 1; BAC40417." evidence="9" ref="1">
    <original>E</original>
    <variation>K</variation>
    <location>
        <position position="106"/>
    </location>
</feature>
<feature type="sequence conflict" description="In Ref. 1; BAC25819." evidence="9" ref="1">
    <original>A</original>
    <variation>P</variation>
    <location>
        <position position="157"/>
    </location>
</feature>
<feature type="sequence conflict" description="In Ref. 2; AAH26966." evidence="9" ref="2">
    <original>A</original>
    <variation>T</variation>
    <location>
        <position position="253"/>
    </location>
</feature>
<feature type="sequence conflict" description="In Ref. 2; AAH26966." evidence="9" ref="2">
    <original>L</original>
    <variation>V</variation>
    <location>
        <position position="259"/>
    </location>
</feature>
<feature type="sequence conflict" description="In Ref. 2; AAH26966." evidence="9" ref="2">
    <original>T</original>
    <variation>M</variation>
    <location>
        <position position="300"/>
    </location>
</feature>
<feature type="sequence conflict" description="In Ref. 1; BAC25819." evidence="9" ref="1">
    <original>E</original>
    <variation>D</variation>
    <location>
        <position position="406"/>
    </location>
</feature>
<proteinExistence type="evidence at protein level"/>
<comment type="function">
    <text evidence="3">Plays a role in mitotic exit and cytokinesis. Recruits PDCD6IP and TSG101 to midbody during cytokinesis. Required for successful completion of cytokinesis. Not required for microtubule nucleation. Plays a role in the development of the brain and kidney.</text>
</comment>
<comment type="subunit">
    <text evidence="3">Homodimer. Interacts (phosphorylated on Ser-423 and Ser-426) with PLK1; the interaction is indirect via the MTMR3:MTMR4 heterooligomer, occurs during early mitosis, regulates the phosphorylation of CEP55 by PLK1 and its recruitment to the midbody where it can mediate cell abscission. Interacts with AKAP9/CG-NAP; the interaction occurs in interphase and is lost upon mitotic entry. Interacts with PCNT/Kendrin; the interaction occurs in interphase and is lost upon mitotic entry. Directly interacts with PDCD6IP; this interaction is required for PDCD6IP targeting to the midbody; CEP55 binds PDCD6IP in a 2:1 stoichiometry; PDCD6IP competes with TSG101 for the same binding site. Interacts with TSG101; TSG101 competes with PDCD6IP for the same binding site; interaction is required for cytokinesis. Interacts with MVB12A, VPS37B, VPS37C and VPS28 (By similarity).</text>
</comment>
<comment type="interaction">
    <interactant intactId="EBI-2552328">
        <id>Q8BT07</id>
    </interactant>
    <interactant intactId="EBI-6674575">
        <id>Q7M6U3</id>
        <label>Tex14</label>
    </interactant>
    <organismsDiffer>false</organismsDiffer>
    <experiments>11</experiments>
</comment>
<comment type="subcellular location">
    <subcellularLocation>
        <location evidence="3">Cytoplasm</location>
    </subcellularLocation>
    <subcellularLocation>
        <location evidence="3">Cytoplasm</location>
        <location evidence="3">Cytoskeleton</location>
        <location evidence="3">Microtubule organizing center</location>
        <location evidence="3">Centrosome</location>
        <location evidence="3">Centriole</location>
    </subcellularLocation>
    <subcellularLocation>
        <location evidence="3">Cytoplasm</location>
        <location evidence="3">Cytoskeleton</location>
        <location evidence="3">Microtubule organizing center</location>
        <location evidence="3">Centrosome</location>
    </subcellularLocation>
    <subcellularLocation>
        <location evidence="3">Cleavage furrow</location>
    </subcellularLocation>
    <subcellularLocation>
        <location evidence="3">Midbody</location>
        <location evidence="3">Midbody ring</location>
    </subcellularLocation>
    <text evidence="3">Present at the centrosomes at interphase. A small portion is associated preferentially with the mother centriole, whereas the majority localizes to the pericentriolar material. During mitosis, loses affinity for the centrosome at the onset of prophase and diffuses throughout the cell. This dissociation from the centrosome is phosphorylation-dependent. May remain localized at the centrosome during mitosis in certain cell types. Appears at the cleavage furrow in late anaphase and in the midbody in cytokinesis.</text>
</comment>
<comment type="alternative products">
    <event type="alternative splicing"/>
    <isoform>
        <id>Q8BT07-1</id>
        <name>1</name>
        <sequence type="displayed"/>
    </isoform>
    <isoform>
        <id>Q8BT07-2</id>
        <name>2</name>
        <sequence type="described" ref="VSP_018630"/>
    </isoform>
</comment>
<comment type="PTM">
    <text evidence="1">There is a hierachy of phosphorylation, where both Ser-423 and Ser-426 are phosphorylated at the onset of mitosis, prior to Ser-434. Phosphorylation at Ser-423 and Ser-426 is required for dissociation from the centrosome at the G2/M boundary. Phosphorylation at the 3 sites, Ser-423, Ser-426 and Ser-434, is required for protein function at the final stages of cell division to complete cytokinesis successfully (By similarity).</text>
</comment>
<evidence type="ECO:0000250" key="1"/>
<evidence type="ECO:0000250" key="2">
    <source>
        <dbReference type="UniProtKB" id="Q4V7C8"/>
    </source>
</evidence>
<evidence type="ECO:0000250" key="3">
    <source>
        <dbReference type="UniProtKB" id="Q53EZ4"/>
    </source>
</evidence>
<evidence type="ECO:0000255" key="4"/>
<evidence type="ECO:0000256" key="5">
    <source>
        <dbReference type="SAM" id="MobiDB-lite"/>
    </source>
</evidence>
<evidence type="ECO:0000269" key="6">
    <source>
    </source>
</evidence>
<evidence type="ECO:0000269" key="7">
    <source>
    </source>
</evidence>
<evidence type="ECO:0000303" key="8">
    <source>
    </source>
</evidence>
<evidence type="ECO:0000305" key="9"/>
<evidence type="ECO:0000312" key="10">
    <source>
        <dbReference type="MGI" id="MGI:1921357"/>
    </source>
</evidence>
<evidence type="ECO:0007744" key="11">
    <source>
    </source>
</evidence>
<evidence type="ECO:0007744" key="12">
    <source>
    </source>
</evidence>
<gene>
    <name evidence="10" type="primary">Cep55</name>
</gene>
<accession>Q8BT07</accession>
<accession>Q8C2J0</accession>
<accession>Q8K2I8</accession>
<accession>Q8R2Y4</accession>
<accession>Q9DBZ8</accession>